<proteinExistence type="inferred from homology"/>
<comment type="function">
    <text evidence="2">Converts adenosylcobinamide (AdoCbi) to adenosylcobyric acid (AdoCby), an intermediate of the de novo coenzyme B12 biosynthetic route.</text>
</comment>
<comment type="catalytic activity">
    <reaction>
        <text>adenosylcob(III)inamide + H2O = (R)-1-aminopropan-2-ol + adenosylcob(III)yrate</text>
        <dbReference type="Rhea" id="RHEA:23504"/>
        <dbReference type="ChEBI" id="CHEBI:2480"/>
        <dbReference type="ChEBI" id="CHEBI:15377"/>
        <dbReference type="ChEBI" id="CHEBI:42677"/>
        <dbReference type="ChEBI" id="CHEBI:58504"/>
        <dbReference type="EC" id="3.5.1.90"/>
    </reaction>
</comment>
<comment type="pathway">
    <text>Cofactor biosynthesis; dicyanocobinamide salvage pathway.</text>
</comment>
<comment type="similarity">
    <text evidence="3">Belongs to the CbiZ family.</text>
</comment>
<feature type="chain" id="PRO_0000220406" description="Adenosylcobinamide amidohydrolase">
    <location>
        <begin position="1"/>
        <end position="231"/>
    </location>
</feature>
<feature type="region of interest" description="Disordered" evidence="1">
    <location>
        <begin position="200"/>
        <end position="231"/>
    </location>
</feature>
<keyword id="KW-0378">Hydrolase</keyword>
<keyword id="KW-1185">Reference proteome</keyword>
<accession>Q9HPK9</accession>
<evidence type="ECO:0000256" key="1">
    <source>
        <dbReference type="SAM" id="MobiDB-lite"/>
    </source>
</evidence>
<evidence type="ECO:0000269" key="2">
    <source>
    </source>
</evidence>
<evidence type="ECO:0000305" key="3"/>
<name>CBIZ_HALSA</name>
<protein>
    <recommendedName>
        <fullName>Adenosylcobinamide amidohydrolase</fullName>
        <shortName>AdoCbi hydrolase</shortName>
        <ecNumber>3.5.1.90</ecNumber>
    </recommendedName>
</protein>
<sequence length="231" mass="23242">MFETTLHDGVLELAAPGARWLSTGWNGGDTRADRAYSITVPDDWAPDSTHEYVTDRLAAAGFAPRDDAPVLLTGVAQEHARIARCGPVAVAATAGLSNPAALPMDPDGGTLPDAKRAPPGTVNLVAATTRALDDAALSNLVAVAAEAKAATLLATAGFPGTTSDAVVVACDPGGETAPYSGSATPVGAATRACVREAVRASLDSRDAASPDSVESAAHGTTTDVQAAVFRP</sequence>
<organism>
    <name type="scientific">Halobacterium salinarum (strain ATCC 700922 / JCM 11081 / NRC-1)</name>
    <name type="common">Halobacterium halobium</name>
    <dbReference type="NCBI Taxonomy" id="64091"/>
    <lineage>
        <taxon>Archaea</taxon>
        <taxon>Methanobacteriati</taxon>
        <taxon>Methanobacteriota</taxon>
        <taxon>Stenosarchaea group</taxon>
        <taxon>Halobacteria</taxon>
        <taxon>Halobacteriales</taxon>
        <taxon>Halobacteriaceae</taxon>
        <taxon>Halobacterium</taxon>
        <taxon>Halobacterium salinarum NRC-34001</taxon>
    </lineage>
</organism>
<reference key="1">
    <citation type="journal article" date="2000" name="Proc. Natl. Acad. Sci. U.S.A.">
        <title>Genome sequence of Halobacterium species NRC-1.</title>
        <authorList>
            <person name="Ng W.V."/>
            <person name="Kennedy S.P."/>
            <person name="Mahairas G.G."/>
            <person name="Berquist B."/>
            <person name="Pan M."/>
            <person name="Shukla H.D."/>
            <person name="Lasky S.R."/>
            <person name="Baliga N.S."/>
            <person name="Thorsson V."/>
            <person name="Sbrogna J."/>
            <person name="Swartzell S."/>
            <person name="Weir D."/>
            <person name="Hall J."/>
            <person name="Dahl T.A."/>
            <person name="Welti R."/>
            <person name="Goo Y.A."/>
            <person name="Leithauser B."/>
            <person name="Keller K."/>
            <person name="Cruz R."/>
            <person name="Danson M.J."/>
            <person name="Hough D.W."/>
            <person name="Maddocks D.G."/>
            <person name="Jablonski P.E."/>
            <person name="Krebs M.P."/>
            <person name="Angevine C.M."/>
            <person name="Dale H."/>
            <person name="Isenbarger T.A."/>
            <person name="Peck R.F."/>
            <person name="Pohlschroder M."/>
            <person name="Spudich J.L."/>
            <person name="Jung K.-H."/>
            <person name="Alam M."/>
            <person name="Freitas T."/>
            <person name="Hou S."/>
            <person name="Daniels C.J."/>
            <person name="Dennis P.P."/>
            <person name="Omer A.D."/>
            <person name="Ebhardt H."/>
            <person name="Lowe T.M."/>
            <person name="Liang P."/>
            <person name="Riley M."/>
            <person name="Hood L."/>
            <person name="DasSarma S."/>
        </authorList>
    </citation>
    <scope>NUCLEOTIDE SEQUENCE [LARGE SCALE GENOMIC DNA]</scope>
    <source>
        <strain>ATCC 700922 / JCM 11081 / NRC-1</strain>
    </source>
</reference>
<reference key="2">
    <citation type="journal article" date="2004" name="Proc. Natl. Acad. Sci. U.S.A.">
        <title>CbiZ, an amidohydrolase enzyme required for salvaging the coenzyme B12 precursor cobinamide in archaea.</title>
        <authorList>
            <person name="Woodson J.D."/>
            <person name="Escalante-Semerena J.C."/>
        </authorList>
    </citation>
    <scope>FUNCTION</scope>
</reference>
<gene>
    <name type="primary">cbiZ</name>
    <name type="ordered locus">VNG_1583C</name>
</gene>
<dbReference type="EC" id="3.5.1.90"/>
<dbReference type="EMBL" id="AE004437">
    <property type="protein sequence ID" value="AAG19858.1"/>
    <property type="molecule type" value="Genomic_DNA"/>
</dbReference>
<dbReference type="PIR" id="F84311">
    <property type="entry name" value="F84311"/>
</dbReference>
<dbReference type="RefSeq" id="WP_010903156.1">
    <property type="nucleotide sequence ID" value="NC_002607.1"/>
</dbReference>
<dbReference type="SMR" id="Q9HPK9"/>
<dbReference type="STRING" id="64091.VNG_1583C"/>
<dbReference type="PaxDb" id="64091-VNG_1583C"/>
<dbReference type="DNASU" id="1448158"/>
<dbReference type="GeneID" id="68694272"/>
<dbReference type="KEGG" id="hal:VNG_1583C"/>
<dbReference type="PATRIC" id="fig|64091.14.peg.1211"/>
<dbReference type="HOGENOM" id="CLU_087823_0_0_2"/>
<dbReference type="InParanoid" id="Q9HPK9"/>
<dbReference type="OrthoDB" id="157452at2157"/>
<dbReference type="BRENDA" id="3.5.1.90">
    <property type="organism ID" value="2559"/>
</dbReference>
<dbReference type="UniPathway" id="UPA00297"/>
<dbReference type="Proteomes" id="UP000000554">
    <property type="component" value="Chromosome"/>
</dbReference>
<dbReference type="GO" id="GO:0043756">
    <property type="term" value="F:adenosylcobinamide hydrolase activity"/>
    <property type="evidence" value="ECO:0007669"/>
    <property type="project" value="UniProtKB-EC"/>
</dbReference>
<dbReference type="InterPro" id="IPR002808">
    <property type="entry name" value="AdoCbi_amidolase"/>
</dbReference>
<dbReference type="InterPro" id="IPR052209">
    <property type="entry name" value="CbiZ"/>
</dbReference>
<dbReference type="PANTHER" id="PTHR35336">
    <property type="entry name" value="ADENOSYLCOBINAMIDE AMIDOHYDROLASE"/>
    <property type="match status" value="1"/>
</dbReference>
<dbReference type="PANTHER" id="PTHR35336:SF5">
    <property type="entry name" value="ADENOSYLCOBINAMIDE AMIDOHYDROLASE"/>
    <property type="match status" value="1"/>
</dbReference>
<dbReference type="Pfam" id="PF01955">
    <property type="entry name" value="CbiZ"/>
    <property type="match status" value="1"/>
</dbReference>